<evidence type="ECO:0000250" key="1">
    <source>
        <dbReference type="UniProtKB" id="P37623"/>
    </source>
</evidence>
<evidence type="ECO:0000305" key="2"/>
<sequence length="195" mass="21738">MYRIVLGKVSTLSAAPLPPGLREQAPQGPRRERWLAGRALLSHTLSPLPEIIYGEQGKPAFAPETPLWFNLSHSGDDIALLLSDEGEVGCDIEVIRPRANWRWLANAVFSLGEHAEMDAVHPDQQLEMFWRIWTRKEAIVKQRGGSAWQIVSVDSTYHSSLSVSHCQLENLSLAICTPTPFTLTADSVQWIDSVN</sequence>
<protein>
    <recommendedName>
        <fullName>4'-phosphopantetheinyl transferase AcpT</fullName>
        <ecNumber evidence="1">2.7.8.7</ecNumber>
    </recommendedName>
</protein>
<gene>
    <name type="primary">acpT</name>
    <name type="ordered locus">Z4867</name>
    <name type="ordered locus">ECs4342</name>
</gene>
<organism>
    <name type="scientific">Escherichia coli O157:H7</name>
    <dbReference type="NCBI Taxonomy" id="83334"/>
    <lineage>
        <taxon>Bacteria</taxon>
        <taxon>Pseudomonadati</taxon>
        <taxon>Pseudomonadota</taxon>
        <taxon>Gammaproteobacteria</taxon>
        <taxon>Enterobacterales</taxon>
        <taxon>Enterobacteriaceae</taxon>
        <taxon>Escherichia</taxon>
    </lineage>
</organism>
<keyword id="KW-1185">Reference proteome</keyword>
<keyword id="KW-0808">Transferase</keyword>
<comment type="function">
    <text evidence="1">May be involved in an alternative pathway for phosphopantetheinyl transfer and holo-ACP synthesis in E.coli. The native apo-protein substrate is unknown. Is able to functionally replace AcpS in vivo but only when expressed at high levels.</text>
</comment>
<comment type="catalytic activity">
    <reaction evidence="1">
        <text>apo-[ACP] + CoA = holo-[ACP] + adenosine 3',5'-bisphosphate + H(+)</text>
        <dbReference type="Rhea" id="RHEA:12068"/>
        <dbReference type="Rhea" id="RHEA-COMP:9685"/>
        <dbReference type="Rhea" id="RHEA-COMP:9690"/>
        <dbReference type="ChEBI" id="CHEBI:15378"/>
        <dbReference type="ChEBI" id="CHEBI:29999"/>
        <dbReference type="ChEBI" id="CHEBI:57287"/>
        <dbReference type="ChEBI" id="CHEBI:58343"/>
        <dbReference type="ChEBI" id="CHEBI:64479"/>
        <dbReference type="EC" id="2.7.8.7"/>
    </reaction>
</comment>
<comment type="similarity">
    <text evidence="2">Belongs to the P-Pant transferase superfamily. Gsp/Sfp/HetI/AcpT family.</text>
</comment>
<proteinExistence type="inferred from homology"/>
<name>ACPT_ECO57</name>
<accession>Q8X5U4</accession>
<dbReference type="EC" id="2.7.8.7" evidence="1"/>
<dbReference type="EMBL" id="AE005174">
    <property type="protein sequence ID" value="AAG58602.1"/>
    <property type="molecule type" value="Genomic_DNA"/>
</dbReference>
<dbReference type="EMBL" id="BA000007">
    <property type="protein sequence ID" value="BAB37765.1"/>
    <property type="molecule type" value="Genomic_DNA"/>
</dbReference>
<dbReference type="PIR" id="F86017">
    <property type="entry name" value="F86017"/>
</dbReference>
<dbReference type="PIR" id="F91171">
    <property type="entry name" value="F91171"/>
</dbReference>
<dbReference type="RefSeq" id="NP_312369.1">
    <property type="nucleotide sequence ID" value="NC_002695.1"/>
</dbReference>
<dbReference type="RefSeq" id="WP_000285784.1">
    <property type="nucleotide sequence ID" value="NZ_VOAI01000004.1"/>
</dbReference>
<dbReference type="SMR" id="Q8X5U4"/>
<dbReference type="STRING" id="155864.Z4867"/>
<dbReference type="GeneID" id="915791"/>
<dbReference type="GeneID" id="93778516"/>
<dbReference type="KEGG" id="ece:Z4867"/>
<dbReference type="KEGG" id="ecs:ECs_4342"/>
<dbReference type="PATRIC" id="fig|386585.9.peg.4535"/>
<dbReference type="eggNOG" id="COG2091">
    <property type="taxonomic scope" value="Bacteria"/>
</dbReference>
<dbReference type="HOGENOM" id="CLU_119926_0_0_6"/>
<dbReference type="OMA" id="WQIVSID"/>
<dbReference type="Proteomes" id="UP000000558">
    <property type="component" value="Chromosome"/>
</dbReference>
<dbReference type="Proteomes" id="UP000002519">
    <property type="component" value="Chromosome"/>
</dbReference>
<dbReference type="GO" id="GO:0005829">
    <property type="term" value="C:cytosol"/>
    <property type="evidence" value="ECO:0007669"/>
    <property type="project" value="TreeGrafter"/>
</dbReference>
<dbReference type="GO" id="GO:0008897">
    <property type="term" value="F:holo-[acyl-carrier-protein] synthase activity"/>
    <property type="evidence" value="ECO:0007669"/>
    <property type="project" value="UniProtKB-EC"/>
</dbReference>
<dbReference type="GO" id="GO:0000287">
    <property type="term" value="F:magnesium ion binding"/>
    <property type="evidence" value="ECO:0007669"/>
    <property type="project" value="InterPro"/>
</dbReference>
<dbReference type="GO" id="GO:0019878">
    <property type="term" value="P:lysine biosynthetic process via aminoadipic acid"/>
    <property type="evidence" value="ECO:0007669"/>
    <property type="project" value="TreeGrafter"/>
</dbReference>
<dbReference type="FunFam" id="3.90.470.20:FF:000002">
    <property type="entry name" value="Holo-(Acyl carrier protein) synthase 2"/>
    <property type="match status" value="1"/>
</dbReference>
<dbReference type="FunFam" id="3.90.470.20:FF:000004">
    <property type="entry name" value="Holo-(Acyl carrier protein) synthase 2"/>
    <property type="match status" value="1"/>
</dbReference>
<dbReference type="Gene3D" id="3.90.470.20">
    <property type="entry name" value="4'-phosphopantetheinyl transferase domain"/>
    <property type="match status" value="1"/>
</dbReference>
<dbReference type="InterPro" id="IPR008278">
    <property type="entry name" value="4-PPantetheinyl_Trfase_dom"/>
</dbReference>
<dbReference type="InterPro" id="IPR037143">
    <property type="entry name" value="4-PPantetheinyl_Trfase_dom_sf"/>
</dbReference>
<dbReference type="InterPro" id="IPR050559">
    <property type="entry name" value="P-Pant_transferase_sf"/>
</dbReference>
<dbReference type="NCBIfam" id="NF007676">
    <property type="entry name" value="PRK10351.1"/>
    <property type="match status" value="1"/>
</dbReference>
<dbReference type="PANTHER" id="PTHR12215:SF10">
    <property type="entry name" value="L-AMINOADIPATE-SEMIALDEHYDE DEHYDROGENASE-PHOSPHOPANTETHEINYL TRANSFERASE"/>
    <property type="match status" value="1"/>
</dbReference>
<dbReference type="PANTHER" id="PTHR12215">
    <property type="entry name" value="PHOSPHOPANTETHEINE TRANSFERASE"/>
    <property type="match status" value="1"/>
</dbReference>
<dbReference type="Pfam" id="PF01648">
    <property type="entry name" value="ACPS"/>
    <property type="match status" value="1"/>
</dbReference>
<dbReference type="SUPFAM" id="SSF56214">
    <property type="entry name" value="4'-phosphopantetheinyl transferase"/>
    <property type="match status" value="2"/>
</dbReference>
<feature type="chain" id="PRO_0000206082" description="4'-phosphopantetheinyl transferase AcpT">
    <location>
        <begin position="1"/>
        <end position="195"/>
    </location>
</feature>
<reference key="1">
    <citation type="journal article" date="2001" name="Nature">
        <title>Genome sequence of enterohaemorrhagic Escherichia coli O157:H7.</title>
        <authorList>
            <person name="Perna N.T."/>
            <person name="Plunkett G. III"/>
            <person name="Burland V."/>
            <person name="Mau B."/>
            <person name="Glasner J.D."/>
            <person name="Rose D.J."/>
            <person name="Mayhew G.F."/>
            <person name="Evans P.S."/>
            <person name="Gregor J."/>
            <person name="Kirkpatrick H.A."/>
            <person name="Posfai G."/>
            <person name="Hackett J."/>
            <person name="Klink S."/>
            <person name="Boutin A."/>
            <person name="Shao Y."/>
            <person name="Miller L."/>
            <person name="Grotbeck E.J."/>
            <person name="Davis N.W."/>
            <person name="Lim A."/>
            <person name="Dimalanta E.T."/>
            <person name="Potamousis K."/>
            <person name="Apodaca J."/>
            <person name="Anantharaman T.S."/>
            <person name="Lin J."/>
            <person name="Yen G."/>
            <person name="Schwartz D.C."/>
            <person name="Welch R.A."/>
            <person name="Blattner F.R."/>
        </authorList>
    </citation>
    <scope>NUCLEOTIDE SEQUENCE [LARGE SCALE GENOMIC DNA]</scope>
    <source>
        <strain>O157:H7 / EDL933 / ATCC 700927 / EHEC</strain>
    </source>
</reference>
<reference key="2">
    <citation type="journal article" date="2001" name="DNA Res.">
        <title>Complete genome sequence of enterohemorrhagic Escherichia coli O157:H7 and genomic comparison with a laboratory strain K-12.</title>
        <authorList>
            <person name="Hayashi T."/>
            <person name="Makino K."/>
            <person name="Ohnishi M."/>
            <person name="Kurokawa K."/>
            <person name="Ishii K."/>
            <person name="Yokoyama K."/>
            <person name="Han C.-G."/>
            <person name="Ohtsubo E."/>
            <person name="Nakayama K."/>
            <person name="Murata T."/>
            <person name="Tanaka M."/>
            <person name="Tobe T."/>
            <person name="Iida T."/>
            <person name="Takami H."/>
            <person name="Honda T."/>
            <person name="Sasakawa C."/>
            <person name="Ogasawara N."/>
            <person name="Yasunaga T."/>
            <person name="Kuhara S."/>
            <person name="Shiba T."/>
            <person name="Hattori M."/>
            <person name="Shinagawa H."/>
        </authorList>
    </citation>
    <scope>NUCLEOTIDE SEQUENCE [LARGE SCALE GENOMIC DNA]</scope>
    <source>
        <strain>O157:H7 / Sakai / RIMD 0509952 / EHEC</strain>
    </source>
</reference>